<organism>
    <name type="scientific">Brucella suis (strain ATCC 23445 / NCTC 10510)</name>
    <dbReference type="NCBI Taxonomy" id="470137"/>
    <lineage>
        <taxon>Bacteria</taxon>
        <taxon>Pseudomonadati</taxon>
        <taxon>Pseudomonadota</taxon>
        <taxon>Alphaproteobacteria</taxon>
        <taxon>Hyphomicrobiales</taxon>
        <taxon>Brucellaceae</taxon>
        <taxon>Brucella/Ochrobactrum group</taxon>
        <taxon>Brucella</taxon>
    </lineage>
</organism>
<accession>A9WXE2</accession>
<keyword id="KW-0963">Cytoplasm</keyword>
<keyword id="KW-0350">Heme biosynthesis</keyword>
<keyword id="KW-0408">Iron</keyword>
<keyword id="KW-0456">Lyase</keyword>
<keyword id="KW-0479">Metal-binding</keyword>
<keyword id="KW-0627">Porphyrin biosynthesis</keyword>
<reference key="1">
    <citation type="submission" date="2007-12" db="EMBL/GenBank/DDBJ databases">
        <title>Brucella suis ATCC 23445 whole genome shotgun sequencing project.</title>
        <authorList>
            <person name="Setubal J.C."/>
            <person name="Bowns C."/>
            <person name="Boyle S."/>
            <person name="Crasta O.R."/>
            <person name="Czar M.J."/>
            <person name="Dharmanolla C."/>
            <person name="Gillespie J.J."/>
            <person name="Kenyon R.W."/>
            <person name="Lu J."/>
            <person name="Mane S."/>
            <person name="Mohapatra S."/>
            <person name="Nagrani S."/>
            <person name="Purkayastha A."/>
            <person name="Rajasimha H.K."/>
            <person name="Shallom J.M."/>
            <person name="Shallom S."/>
            <person name="Shukla M."/>
            <person name="Snyder E.E."/>
            <person name="Sobral B.W."/>
            <person name="Wattam A.R."/>
            <person name="Will R."/>
            <person name="Williams K."/>
            <person name="Yoo H."/>
            <person name="Bruce D."/>
            <person name="Detter C."/>
            <person name="Munk C."/>
            <person name="Brettin T.S."/>
        </authorList>
    </citation>
    <scope>NUCLEOTIDE SEQUENCE [LARGE SCALE GENOMIC DNA]</scope>
    <source>
        <strain>ATCC 23445 / NCTC 10510</strain>
    </source>
</reference>
<gene>
    <name evidence="1" type="primary">hemH</name>
    <name type="ordered locus">BSUIS_B0081</name>
</gene>
<proteinExistence type="inferred from homology"/>
<evidence type="ECO:0000255" key="1">
    <source>
        <dbReference type="HAMAP-Rule" id="MF_00323"/>
    </source>
</evidence>
<dbReference type="EC" id="4.98.1.1" evidence="1"/>
<dbReference type="EMBL" id="CP000912">
    <property type="protein sequence ID" value="ABY39108.1"/>
    <property type="molecule type" value="Genomic_DNA"/>
</dbReference>
<dbReference type="RefSeq" id="WP_004681236.1">
    <property type="nucleotide sequence ID" value="NC_010167.1"/>
</dbReference>
<dbReference type="SMR" id="A9WXE2"/>
<dbReference type="GeneID" id="97535704"/>
<dbReference type="KEGG" id="bmt:BSUIS_B0081"/>
<dbReference type="HOGENOM" id="CLU_018884_0_0_5"/>
<dbReference type="UniPathway" id="UPA00252">
    <property type="reaction ID" value="UER00325"/>
</dbReference>
<dbReference type="PRO" id="PR:A9WXE2"/>
<dbReference type="Proteomes" id="UP000008545">
    <property type="component" value="Chromosome II"/>
</dbReference>
<dbReference type="GO" id="GO:0005737">
    <property type="term" value="C:cytoplasm"/>
    <property type="evidence" value="ECO:0007669"/>
    <property type="project" value="UniProtKB-SubCell"/>
</dbReference>
<dbReference type="GO" id="GO:0004325">
    <property type="term" value="F:ferrochelatase activity"/>
    <property type="evidence" value="ECO:0007669"/>
    <property type="project" value="UniProtKB-UniRule"/>
</dbReference>
<dbReference type="GO" id="GO:0046872">
    <property type="term" value="F:metal ion binding"/>
    <property type="evidence" value="ECO:0007669"/>
    <property type="project" value="UniProtKB-KW"/>
</dbReference>
<dbReference type="GO" id="GO:0006783">
    <property type="term" value="P:heme biosynthetic process"/>
    <property type="evidence" value="ECO:0007669"/>
    <property type="project" value="UniProtKB-UniRule"/>
</dbReference>
<dbReference type="CDD" id="cd00419">
    <property type="entry name" value="Ferrochelatase_C"/>
    <property type="match status" value="1"/>
</dbReference>
<dbReference type="CDD" id="cd03411">
    <property type="entry name" value="Ferrochelatase_N"/>
    <property type="match status" value="1"/>
</dbReference>
<dbReference type="FunFam" id="3.40.50.1400:FF:000002">
    <property type="entry name" value="Ferrochelatase"/>
    <property type="match status" value="1"/>
</dbReference>
<dbReference type="Gene3D" id="3.40.50.1400">
    <property type="match status" value="2"/>
</dbReference>
<dbReference type="HAMAP" id="MF_00323">
    <property type="entry name" value="Ferrochelatase"/>
    <property type="match status" value="1"/>
</dbReference>
<dbReference type="InterPro" id="IPR001015">
    <property type="entry name" value="Ferrochelatase"/>
</dbReference>
<dbReference type="InterPro" id="IPR019772">
    <property type="entry name" value="Ferrochelatase_AS"/>
</dbReference>
<dbReference type="InterPro" id="IPR033644">
    <property type="entry name" value="Ferrochelatase_C"/>
</dbReference>
<dbReference type="InterPro" id="IPR033659">
    <property type="entry name" value="Ferrochelatase_N"/>
</dbReference>
<dbReference type="NCBIfam" id="TIGR00109">
    <property type="entry name" value="hemH"/>
    <property type="match status" value="1"/>
</dbReference>
<dbReference type="PANTHER" id="PTHR11108">
    <property type="entry name" value="FERROCHELATASE"/>
    <property type="match status" value="1"/>
</dbReference>
<dbReference type="PANTHER" id="PTHR11108:SF1">
    <property type="entry name" value="FERROCHELATASE, MITOCHONDRIAL"/>
    <property type="match status" value="1"/>
</dbReference>
<dbReference type="Pfam" id="PF00762">
    <property type="entry name" value="Ferrochelatase"/>
    <property type="match status" value="1"/>
</dbReference>
<dbReference type="SUPFAM" id="SSF53800">
    <property type="entry name" value="Chelatase"/>
    <property type="match status" value="1"/>
</dbReference>
<dbReference type="PROSITE" id="PS00534">
    <property type="entry name" value="FERROCHELATASE"/>
    <property type="match status" value="1"/>
</dbReference>
<sequence length="352" mass="40057">MSGTDKVRVNVSQTAQTPLHTSAKLPKVGVLLVNLGTPDGTSYGPMRRYLAEFLSDRRVIEWSRLIWYPILYGIVLNTRPRRSGRLYDRIWNHENNESPLRTYTRAQGEKLAKALSDQPNVVVDWAMRYGQPSIESITDRLLQQGCERIVIFPLYPQYSATTTATVNDKFFEALMKKRFMPAIRTVPSYEAEPVYIDALARSVEKHLATLSFKPEVILTSYHGIPKSYSDKGDPYRQQCLETTRLLRERLGLGEDEMRATFQSRFGPEEWLQPYTDETVKELAKNGVKSVAVLNPGFVADCLETVDEIGNEAAEEFLENGGENFSHIPCLNDSEEGMKVIETLVRRELLGWV</sequence>
<feature type="chain" id="PRO_1000079193" description="Ferrochelatase">
    <location>
        <begin position="1"/>
        <end position="352"/>
    </location>
</feature>
<feature type="binding site" evidence="1">
    <location>
        <position position="222"/>
    </location>
    <ligand>
        <name>Fe cation</name>
        <dbReference type="ChEBI" id="CHEBI:24875"/>
    </ligand>
</feature>
<feature type="binding site" evidence="1">
    <location>
        <position position="303"/>
    </location>
    <ligand>
        <name>Fe cation</name>
        <dbReference type="ChEBI" id="CHEBI:24875"/>
    </ligand>
</feature>
<protein>
    <recommendedName>
        <fullName evidence="1">Ferrochelatase</fullName>
        <ecNumber evidence="1">4.98.1.1</ecNumber>
    </recommendedName>
    <alternativeName>
        <fullName evidence="1">Heme synthase</fullName>
    </alternativeName>
    <alternativeName>
        <fullName evidence="1">Protoheme ferro-lyase</fullName>
    </alternativeName>
</protein>
<comment type="function">
    <text evidence="1">Catalyzes the ferrous insertion into protoporphyrin IX.</text>
</comment>
<comment type="catalytic activity">
    <reaction evidence="1">
        <text>heme b + 2 H(+) = protoporphyrin IX + Fe(2+)</text>
        <dbReference type="Rhea" id="RHEA:22584"/>
        <dbReference type="ChEBI" id="CHEBI:15378"/>
        <dbReference type="ChEBI" id="CHEBI:29033"/>
        <dbReference type="ChEBI" id="CHEBI:57306"/>
        <dbReference type="ChEBI" id="CHEBI:60344"/>
        <dbReference type="EC" id="4.98.1.1"/>
    </reaction>
</comment>
<comment type="pathway">
    <text evidence="1">Porphyrin-containing compound metabolism; protoheme biosynthesis; protoheme from protoporphyrin-IX: step 1/1.</text>
</comment>
<comment type="subcellular location">
    <subcellularLocation>
        <location evidence="1">Cytoplasm</location>
    </subcellularLocation>
</comment>
<comment type="similarity">
    <text evidence="1">Belongs to the ferrochelatase family.</text>
</comment>
<name>HEMH_BRUSI</name>